<reference key="1">
    <citation type="journal article" date="2004" name="Science">
        <title>A predator unmasked: life cycle of Bdellovibrio bacteriovorus from a genomic perspective.</title>
        <authorList>
            <person name="Rendulic S."/>
            <person name="Jagtap P."/>
            <person name="Rosinus A."/>
            <person name="Eppinger M."/>
            <person name="Baar C."/>
            <person name="Lanz C."/>
            <person name="Keller H."/>
            <person name="Lambert C."/>
            <person name="Evans K.J."/>
            <person name="Goesmann A."/>
            <person name="Meyer F."/>
            <person name="Sockett R.E."/>
            <person name="Schuster S.C."/>
        </authorList>
    </citation>
    <scope>NUCLEOTIDE SEQUENCE [LARGE SCALE GENOMIC DNA]</scope>
    <source>
        <strain>ATCC 15356 / DSM 50701 / NCIMB 9529 / HD100</strain>
    </source>
</reference>
<accession>Q6MJP9</accession>
<name>HUTI_BDEBA</name>
<sequence>MGPMCLNRHMGILLKNISTLLTLQGAAAKQGRRIKEEDLSLLQQAAVVIEKNKIVWVGPQKKLPKEFARKKALRDYDMRGRTVLPGFVECHTHLIFAGDRAAEFEMRNQGVSYQEIAAKGGGILSTMKKTRASSLNDLVKAGQRRLDHFVSQGVTTVEIKSGYALNLKDELKMLQAAQKLSGIRTVNTFLGAHALPPEFKSYEDYLTFLADEVLPVVAKKKLARRVDVFIEKGFFPPEASEKYLRRAQELGFEILIHADQMSLSGGSEIAVRLGALSGDHLLQIEDKEIRKLAQSEVTGVLLPTADLYTKTKYPPARAMIDAGVRVALATDFNPGTSPTQNLNLVGLLARLEMKMSLPEVIAAYTVGGAHALNLQNEVGSLEVGKSADILCIDQDWQTLFYSVGEASEKVVFSRGKKVFGTLK</sequence>
<evidence type="ECO:0000255" key="1">
    <source>
        <dbReference type="HAMAP-Rule" id="MF_00372"/>
    </source>
</evidence>
<gene>
    <name evidence="1" type="primary">hutI</name>
    <name type="ordered locus">Bd2721</name>
</gene>
<comment type="function">
    <text evidence="1">Catalyzes the hydrolytic cleavage of the carbon-nitrogen bond in imidazolone-5-propanoate to yield N-formimidoyl-L-glutamate. It is the third step in the universal histidine degradation pathway.</text>
</comment>
<comment type="catalytic activity">
    <reaction evidence="1">
        <text>4-imidazolone-5-propanoate + H2O = N-formimidoyl-L-glutamate</text>
        <dbReference type="Rhea" id="RHEA:23660"/>
        <dbReference type="ChEBI" id="CHEBI:15377"/>
        <dbReference type="ChEBI" id="CHEBI:58928"/>
        <dbReference type="ChEBI" id="CHEBI:77893"/>
        <dbReference type="EC" id="3.5.2.7"/>
    </reaction>
</comment>
<comment type="cofactor">
    <cofactor evidence="1">
        <name>Zn(2+)</name>
        <dbReference type="ChEBI" id="CHEBI:29105"/>
    </cofactor>
    <cofactor evidence="1">
        <name>Fe(3+)</name>
        <dbReference type="ChEBI" id="CHEBI:29034"/>
    </cofactor>
    <text evidence="1">Binds 1 zinc or iron ion per subunit.</text>
</comment>
<comment type="pathway">
    <text evidence="1">Amino-acid degradation; L-histidine degradation into L-glutamate; N-formimidoyl-L-glutamate from L-histidine: step 3/3.</text>
</comment>
<comment type="subcellular location">
    <subcellularLocation>
        <location evidence="1">Cytoplasm</location>
    </subcellularLocation>
</comment>
<comment type="similarity">
    <text evidence="1">Belongs to the metallo-dependent hydrolases superfamily. HutI family.</text>
</comment>
<organism>
    <name type="scientific">Bdellovibrio bacteriovorus (strain ATCC 15356 / DSM 50701 / NCIMB 9529 / HD100)</name>
    <dbReference type="NCBI Taxonomy" id="264462"/>
    <lineage>
        <taxon>Bacteria</taxon>
        <taxon>Pseudomonadati</taxon>
        <taxon>Bdellovibrionota</taxon>
        <taxon>Bdellovibrionia</taxon>
        <taxon>Bdellovibrionales</taxon>
        <taxon>Pseudobdellovibrionaceae</taxon>
        <taxon>Bdellovibrio</taxon>
    </lineage>
</organism>
<dbReference type="EC" id="3.5.2.7" evidence="1"/>
<dbReference type="EMBL" id="BX842653">
    <property type="protein sequence ID" value="CAE80511.1"/>
    <property type="molecule type" value="Genomic_DNA"/>
</dbReference>
<dbReference type="SMR" id="Q6MJP9"/>
<dbReference type="STRING" id="264462.Bd2721"/>
<dbReference type="KEGG" id="bba:Bd2721"/>
<dbReference type="eggNOG" id="COG1228">
    <property type="taxonomic scope" value="Bacteria"/>
</dbReference>
<dbReference type="HOGENOM" id="CLU_041647_0_1_7"/>
<dbReference type="UniPathway" id="UPA00379">
    <property type="reaction ID" value="UER00551"/>
</dbReference>
<dbReference type="Proteomes" id="UP000008080">
    <property type="component" value="Chromosome"/>
</dbReference>
<dbReference type="GO" id="GO:0005737">
    <property type="term" value="C:cytoplasm"/>
    <property type="evidence" value="ECO:0007669"/>
    <property type="project" value="UniProtKB-SubCell"/>
</dbReference>
<dbReference type="GO" id="GO:0050480">
    <property type="term" value="F:imidazolonepropionase activity"/>
    <property type="evidence" value="ECO:0007669"/>
    <property type="project" value="UniProtKB-UniRule"/>
</dbReference>
<dbReference type="GO" id="GO:0005506">
    <property type="term" value="F:iron ion binding"/>
    <property type="evidence" value="ECO:0007669"/>
    <property type="project" value="UniProtKB-UniRule"/>
</dbReference>
<dbReference type="GO" id="GO:0008270">
    <property type="term" value="F:zinc ion binding"/>
    <property type="evidence" value="ECO:0007669"/>
    <property type="project" value="UniProtKB-UniRule"/>
</dbReference>
<dbReference type="GO" id="GO:0019556">
    <property type="term" value="P:L-histidine catabolic process to glutamate and formamide"/>
    <property type="evidence" value="ECO:0007669"/>
    <property type="project" value="UniProtKB-UniPathway"/>
</dbReference>
<dbReference type="GO" id="GO:0019557">
    <property type="term" value="P:L-histidine catabolic process to glutamate and formate"/>
    <property type="evidence" value="ECO:0007669"/>
    <property type="project" value="UniProtKB-UniPathway"/>
</dbReference>
<dbReference type="FunFam" id="3.20.20.140:FF:000007">
    <property type="entry name" value="Imidazolonepropionase"/>
    <property type="match status" value="1"/>
</dbReference>
<dbReference type="Gene3D" id="3.20.20.140">
    <property type="entry name" value="Metal-dependent hydrolases"/>
    <property type="match status" value="1"/>
</dbReference>
<dbReference type="Gene3D" id="2.30.40.10">
    <property type="entry name" value="Urease, subunit C, domain 1"/>
    <property type="match status" value="1"/>
</dbReference>
<dbReference type="HAMAP" id="MF_00372">
    <property type="entry name" value="HutI"/>
    <property type="match status" value="1"/>
</dbReference>
<dbReference type="InterPro" id="IPR006680">
    <property type="entry name" value="Amidohydro-rel"/>
</dbReference>
<dbReference type="InterPro" id="IPR005920">
    <property type="entry name" value="HutI"/>
</dbReference>
<dbReference type="InterPro" id="IPR011059">
    <property type="entry name" value="Metal-dep_hydrolase_composite"/>
</dbReference>
<dbReference type="InterPro" id="IPR032466">
    <property type="entry name" value="Metal_Hydrolase"/>
</dbReference>
<dbReference type="NCBIfam" id="TIGR01224">
    <property type="entry name" value="hutI"/>
    <property type="match status" value="1"/>
</dbReference>
<dbReference type="PANTHER" id="PTHR42752">
    <property type="entry name" value="IMIDAZOLONEPROPIONASE"/>
    <property type="match status" value="1"/>
</dbReference>
<dbReference type="PANTHER" id="PTHR42752:SF1">
    <property type="entry name" value="IMIDAZOLONEPROPIONASE-RELATED"/>
    <property type="match status" value="1"/>
</dbReference>
<dbReference type="Pfam" id="PF01979">
    <property type="entry name" value="Amidohydro_1"/>
    <property type="match status" value="1"/>
</dbReference>
<dbReference type="SUPFAM" id="SSF51338">
    <property type="entry name" value="Composite domain of metallo-dependent hydrolases"/>
    <property type="match status" value="1"/>
</dbReference>
<dbReference type="SUPFAM" id="SSF51556">
    <property type="entry name" value="Metallo-dependent hydrolases"/>
    <property type="match status" value="1"/>
</dbReference>
<feature type="chain" id="PRO_0000306439" description="Imidazolonepropionase">
    <location>
        <begin position="1"/>
        <end position="423"/>
    </location>
</feature>
<feature type="binding site" evidence="1">
    <location>
        <position position="91"/>
    </location>
    <ligand>
        <name>Fe(3+)</name>
        <dbReference type="ChEBI" id="CHEBI:29034"/>
    </ligand>
</feature>
<feature type="binding site" evidence="1">
    <location>
        <position position="91"/>
    </location>
    <ligand>
        <name>Zn(2+)</name>
        <dbReference type="ChEBI" id="CHEBI:29105"/>
    </ligand>
</feature>
<feature type="binding site" evidence="1">
    <location>
        <position position="93"/>
    </location>
    <ligand>
        <name>Fe(3+)</name>
        <dbReference type="ChEBI" id="CHEBI:29034"/>
    </ligand>
</feature>
<feature type="binding site" evidence="1">
    <location>
        <position position="93"/>
    </location>
    <ligand>
        <name>Zn(2+)</name>
        <dbReference type="ChEBI" id="CHEBI:29105"/>
    </ligand>
</feature>
<feature type="binding site" evidence="1">
    <location>
        <position position="100"/>
    </location>
    <ligand>
        <name>4-imidazolone-5-propanoate</name>
        <dbReference type="ChEBI" id="CHEBI:77893"/>
    </ligand>
</feature>
<feature type="binding site" evidence="1">
    <location>
        <position position="163"/>
    </location>
    <ligand>
        <name>4-imidazolone-5-propanoate</name>
        <dbReference type="ChEBI" id="CHEBI:77893"/>
    </ligand>
</feature>
<feature type="binding site" evidence="1">
    <location>
        <position position="163"/>
    </location>
    <ligand>
        <name>N-formimidoyl-L-glutamate</name>
        <dbReference type="ChEBI" id="CHEBI:58928"/>
    </ligand>
</feature>
<feature type="binding site" evidence="1">
    <location>
        <position position="193"/>
    </location>
    <ligand>
        <name>4-imidazolone-5-propanoate</name>
        <dbReference type="ChEBI" id="CHEBI:77893"/>
    </ligand>
</feature>
<feature type="binding site" evidence="1">
    <location>
        <position position="257"/>
    </location>
    <ligand>
        <name>Fe(3+)</name>
        <dbReference type="ChEBI" id="CHEBI:29034"/>
    </ligand>
</feature>
<feature type="binding site" evidence="1">
    <location>
        <position position="257"/>
    </location>
    <ligand>
        <name>Zn(2+)</name>
        <dbReference type="ChEBI" id="CHEBI:29105"/>
    </ligand>
</feature>
<feature type="binding site" evidence="1">
    <location>
        <position position="260"/>
    </location>
    <ligand>
        <name>4-imidazolone-5-propanoate</name>
        <dbReference type="ChEBI" id="CHEBI:77893"/>
    </ligand>
</feature>
<feature type="binding site" evidence="1">
    <location>
        <position position="331"/>
    </location>
    <ligand>
        <name>Fe(3+)</name>
        <dbReference type="ChEBI" id="CHEBI:29034"/>
    </ligand>
</feature>
<feature type="binding site" evidence="1">
    <location>
        <position position="331"/>
    </location>
    <ligand>
        <name>Zn(2+)</name>
        <dbReference type="ChEBI" id="CHEBI:29105"/>
    </ligand>
</feature>
<feature type="binding site" evidence="1">
    <location>
        <position position="333"/>
    </location>
    <ligand>
        <name>N-formimidoyl-L-glutamate</name>
        <dbReference type="ChEBI" id="CHEBI:58928"/>
    </ligand>
</feature>
<feature type="binding site" evidence="1">
    <location>
        <position position="335"/>
    </location>
    <ligand>
        <name>N-formimidoyl-L-glutamate</name>
        <dbReference type="ChEBI" id="CHEBI:58928"/>
    </ligand>
</feature>
<feature type="binding site" evidence="1">
    <location>
        <position position="336"/>
    </location>
    <ligand>
        <name>4-imidazolone-5-propanoate</name>
        <dbReference type="ChEBI" id="CHEBI:77893"/>
    </ligand>
</feature>
<protein>
    <recommendedName>
        <fullName evidence="1">Imidazolonepropionase</fullName>
        <ecNumber evidence="1">3.5.2.7</ecNumber>
    </recommendedName>
    <alternativeName>
        <fullName evidence="1">Imidazolone-5-propionate hydrolase</fullName>
    </alternativeName>
</protein>
<keyword id="KW-0963">Cytoplasm</keyword>
<keyword id="KW-0369">Histidine metabolism</keyword>
<keyword id="KW-0378">Hydrolase</keyword>
<keyword id="KW-0408">Iron</keyword>
<keyword id="KW-0479">Metal-binding</keyword>
<keyword id="KW-1185">Reference proteome</keyword>
<keyword id="KW-0862">Zinc</keyword>
<proteinExistence type="inferred from homology"/>